<protein>
    <recommendedName>
        <fullName evidence="1">Nucleoprotein</fullName>
    </recommendedName>
    <alternativeName>
        <fullName evidence="1">Nucleocapsid protein</fullName>
        <shortName evidence="1">Protein N</shortName>
    </alternativeName>
</protein>
<comment type="function">
    <text evidence="1">Encapsidates the negative strand viral RNA, protecting it from nucleases. The encapsidated genomic RNA is termed the ribonucleoprotein (RNP) and serves as template for transcription and replication. The RNP needs to be localized in the host nucleus to start an infectious cycle, but is too large to diffuse through the nuclear pore complex. NP comprises at least 2 nuclear localization signals that are responsible for the active RNP import into the nucleus through cellular importin alpha/beta pathway. Later in the infection, nclear export of RNPs are mediated through viral proteins NEP interacting with M1 which binds nucleoproteins. It is possible that nucleoprotein binds directly host exportin-1/XPO1 and plays an active role in RNPs nuclear export. M1 interaction with RNP seems to hide nucleoprotein's nuclear localization signals. Soon after a virion infects a new cell, M1 dissociates from the RNP under acidification of the virion driven by M2 protein. Dissociation of M1 from RNP unmasks nucleoprotein's nuclear localization signals, targeting the RNP to the nucleus.</text>
</comment>
<comment type="subunit">
    <text evidence="1">Homomultimerizes to form the nucleocapsid. May bind host exportin-1/XPO1. Binds to viral genomic RNA. Protein-RNA contacts are mediated by a combination of electrostatic interactions between positively charged residues and the phosphate backbone and planar interactions between aromatic side chains and bases.</text>
</comment>
<comment type="subcellular location">
    <subcellularLocation>
        <location evidence="1">Virion</location>
    </subcellularLocation>
    <subcellularLocation>
        <location evidence="1">Host nucleus</location>
    </subcellularLocation>
</comment>
<comment type="PTM">
    <text evidence="1">Late in virus-infected cells, may be cleaved from a 56-kDa protein to a 53-kDa protein by a cellular caspase. This cleavage might be a marker for the onset of apoptosis in infected cells or have a specific function in virus host interaction.</text>
</comment>
<comment type="similarity">
    <text evidence="1">Belongs to the influenza viruses nucleoprotein family.</text>
</comment>
<accession>Q6DPC7</accession>
<keyword id="KW-0167">Capsid protein</keyword>
<keyword id="KW-1139">Helical capsid protein</keyword>
<keyword id="KW-1048">Host nucleus</keyword>
<keyword id="KW-0945">Host-virus interaction</keyword>
<keyword id="KW-0687">Ribonucleoprotein</keyword>
<keyword id="KW-0694">RNA-binding</keyword>
<keyword id="KW-0543">Viral nucleoprotein</keyword>
<keyword id="KW-1163">Viral penetration into host nucleus</keyword>
<keyword id="KW-0946">Virion</keyword>
<keyword id="KW-1160">Virus entry into host cell</keyword>
<organism>
    <name type="scientific">Influenza A virus (strain A/Chicken/Shantou/4231/2003 H5N1 genotype V)</name>
    <dbReference type="NCBI Taxonomy" id="284184"/>
    <lineage>
        <taxon>Viruses</taxon>
        <taxon>Riboviria</taxon>
        <taxon>Orthornavirae</taxon>
        <taxon>Negarnaviricota</taxon>
        <taxon>Polyploviricotina</taxon>
        <taxon>Insthoviricetes</taxon>
        <taxon>Articulavirales</taxon>
        <taxon>Orthomyxoviridae</taxon>
        <taxon>Alphainfluenzavirus</taxon>
        <taxon>Alphainfluenzavirus influenzae</taxon>
        <taxon>Influenza A virus</taxon>
    </lineage>
</organism>
<feature type="chain" id="PRO_0000310927" description="Nucleoprotein">
    <location>
        <begin position="1"/>
        <end position="498"/>
    </location>
</feature>
<feature type="region of interest" description="Disordered" evidence="2">
    <location>
        <begin position="1"/>
        <end position="21"/>
    </location>
</feature>
<feature type="short sequence motif" description="Unconventional nuclear localization signal" evidence="1">
    <location>
        <begin position="1"/>
        <end position="18"/>
    </location>
</feature>
<feature type="short sequence motif" description="Bipartite nuclear localization signal" evidence="1">
    <location>
        <begin position="198"/>
        <end position="216"/>
    </location>
</feature>
<organismHost>
    <name type="scientific">Aves</name>
    <dbReference type="NCBI Taxonomy" id="8782"/>
</organismHost>
<organismHost>
    <name type="scientific">Felis catus</name>
    <name type="common">Cat</name>
    <name type="synonym">Felis silvestris catus</name>
    <dbReference type="NCBI Taxonomy" id="9685"/>
</organismHost>
<organismHost>
    <name type="scientific">Homo sapiens</name>
    <name type="common">Human</name>
    <dbReference type="NCBI Taxonomy" id="9606"/>
</organismHost>
<organismHost>
    <name type="scientific">Panthera pardus</name>
    <name type="common">Leopard</name>
    <name type="synonym">Felis pardus</name>
    <dbReference type="NCBI Taxonomy" id="9691"/>
</organismHost>
<organismHost>
    <name type="scientific">Panthera tigris</name>
    <name type="common">Tiger</name>
    <dbReference type="NCBI Taxonomy" id="9694"/>
</organismHost>
<organismHost>
    <name type="scientific">Sus scrofa</name>
    <name type="common">Pig</name>
    <dbReference type="NCBI Taxonomy" id="9823"/>
</organismHost>
<sequence>MASQGTKRSYEQMETGGERQNATEIRASVGRMVSGIGRFYIQMCTELKLSDYEGRLIQNSITIERMVLSAFDERRNRYLEEHPSAGKDPKKTGGPIYRRRDGKWVRELILYDKEEIRRIWRQANNGEDATAGLTHLMIWHSNLNDATYQRTRALVRTGMDPRMCSLMQGSTLPRRSGAAGAAVKGVGTMVMELIRMIKRGINDRNFWRGENGRRTRIAYERMCNILKGKFQTAAQRAMMDQVRESRNPGNAEIEDLIFLARSALILRGSVAHKSCLPACVYGLAVASGYDFEREGYSLVGIDPFRLLQNSQVFSLIRPNENPAHKSQLVWMACHSAAFEDLRVSSFIRGTRVVPRGQLSTRGVQIASNENMEAMDSNTLELRSRYWAIRTRSGGNTNQQKASAGQISVQPTFSVQRNLPFERATIMAAFTGNTEGRTSDMRTEIIRMMESARPEDVSFQGRGVFELSDEKATNPIVPSFDMNNEGSYFFGDNAEEYDN</sequence>
<proteinExistence type="inferred from homology"/>
<name>NCAP_I03A1</name>
<gene>
    <name evidence="1" type="primary">NP</name>
</gene>
<evidence type="ECO:0000255" key="1">
    <source>
        <dbReference type="HAMAP-Rule" id="MF_04070"/>
    </source>
</evidence>
<evidence type="ECO:0000256" key="2">
    <source>
        <dbReference type="SAM" id="MobiDB-lite"/>
    </source>
</evidence>
<reference key="1">
    <citation type="journal article" date="2004" name="Nature">
        <title>Genesis of a highly pathogenic and potentially pandemic H5N1 influenza virus in eastern Asia.</title>
        <authorList>
            <person name="Li K.S."/>
            <person name="Guan Y."/>
            <person name="Wang J."/>
            <person name="Smith G.J.D."/>
            <person name="Xu K.M."/>
            <person name="Duan L."/>
            <person name="Rahardjo A.P."/>
            <person name="Puthavathana P."/>
            <person name="Buranathai C."/>
            <person name="Nguyen T.D."/>
            <person name="Estoepangestie A.T.S."/>
            <person name="Chaisingh A."/>
            <person name="Auewarakul P."/>
            <person name="Long H.T."/>
            <person name="Hanh N.T.H."/>
            <person name="Webby R.J."/>
            <person name="Poon L.L.M."/>
            <person name="Chen H."/>
            <person name="Shortridge K.F."/>
            <person name="Yuen K.Y."/>
            <person name="Webster R.G."/>
            <person name="Peiris J.S.M."/>
        </authorList>
    </citation>
    <scope>NUCLEOTIDE SEQUENCE [GENOMIC RNA]</scope>
</reference>
<reference key="2">
    <citation type="submission" date="2008-03" db="EMBL/GenBank/DDBJ databases">
        <authorList>
            <person name="Li K.S."/>
            <person name="Guan Y."/>
            <person name="Wang J."/>
            <person name="Smith G.J.D."/>
            <person name="Xu K.M."/>
            <person name="Duan L."/>
            <person name="Rahardjo A.P."/>
            <person name="Puthavathana P."/>
            <person name="Buranathai C."/>
            <person name="Nguyen T.D."/>
            <person name="Estoepangestie A.T.S."/>
            <person name="Chaisingh A."/>
            <person name="Auewarakul P."/>
            <person name="Long H.T."/>
            <person name="Hanh N.T.H."/>
            <person name="Lim W."/>
            <person name="Webby R.J."/>
            <person name="Poon L.L.M."/>
            <person name="Chen H."/>
            <person name="Shortridge K.F."/>
            <person name="Yuen K.Y."/>
            <person name="Webster R.G."/>
            <person name="Peiris J.S.M."/>
        </authorList>
    </citation>
    <scope>SEQUENCE REVISION</scope>
</reference>
<dbReference type="EMBL" id="AY651532">
    <property type="protein sequence ID" value="AAT70663.2"/>
    <property type="molecule type" value="Genomic_RNA"/>
</dbReference>
<dbReference type="SMR" id="Q6DPC7"/>
<dbReference type="GO" id="GO:0019029">
    <property type="term" value="C:helical viral capsid"/>
    <property type="evidence" value="ECO:0007669"/>
    <property type="project" value="UniProtKB-UniRule"/>
</dbReference>
<dbReference type="GO" id="GO:0043657">
    <property type="term" value="C:host cell"/>
    <property type="evidence" value="ECO:0007669"/>
    <property type="project" value="GOC"/>
</dbReference>
<dbReference type="GO" id="GO:0042025">
    <property type="term" value="C:host cell nucleus"/>
    <property type="evidence" value="ECO:0007669"/>
    <property type="project" value="UniProtKB-SubCell"/>
</dbReference>
<dbReference type="GO" id="GO:1990904">
    <property type="term" value="C:ribonucleoprotein complex"/>
    <property type="evidence" value="ECO:0007669"/>
    <property type="project" value="UniProtKB-KW"/>
</dbReference>
<dbReference type="GO" id="GO:0019013">
    <property type="term" value="C:viral nucleocapsid"/>
    <property type="evidence" value="ECO:0007669"/>
    <property type="project" value="UniProtKB-UniRule"/>
</dbReference>
<dbReference type="GO" id="GO:0003723">
    <property type="term" value="F:RNA binding"/>
    <property type="evidence" value="ECO:0007669"/>
    <property type="project" value="UniProtKB-UniRule"/>
</dbReference>
<dbReference type="GO" id="GO:0005198">
    <property type="term" value="F:structural molecule activity"/>
    <property type="evidence" value="ECO:0007669"/>
    <property type="project" value="UniProtKB-UniRule"/>
</dbReference>
<dbReference type="GO" id="GO:0046718">
    <property type="term" value="P:symbiont entry into host cell"/>
    <property type="evidence" value="ECO:0007669"/>
    <property type="project" value="UniProtKB-KW"/>
</dbReference>
<dbReference type="GO" id="GO:0075732">
    <property type="term" value="P:viral penetration into host nucleus"/>
    <property type="evidence" value="ECO:0007669"/>
    <property type="project" value="UniProtKB-UniRule"/>
</dbReference>
<dbReference type="HAMAP" id="MF_04070">
    <property type="entry name" value="INFV_NCAP"/>
    <property type="match status" value="1"/>
</dbReference>
<dbReference type="InterPro" id="IPR002141">
    <property type="entry name" value="Flu_NP"/>
</dbReference>
<dbReference type="Pfam" id="PF00506">
    <property type="entry name" value="Flu_NP"/>
    <property type="match status" value="1"/>
</dbReference>
<dbReference type="SUPFAM" id="SSF161003">
    <property type="entry name" value="flu NP-like"/>
    <property type="match status" value="1"/>
</dbReference>